<reference key="1">
    <citation type="journal article" date="2011" name="Stand. Genomic Sci.">
        <title>Complete genome sequence of the filamentous gliding predatory bacterium Herpetosiphon aurantiacus type strain (114-95(T)).</title>
        <authorList>
            <person name="Kiss H."/>
            <person name="Nett M."/>
            <person name="Domin N."/>
            <person name="Martin K."/>
            <person name="Maresca J.A."/>
            <person name="Copeland A."/>
            <person name="Lapidus A."/>
            <person name="Lucas S."/>
            <person name="Berry K.W."/>
            <person name="Glavina Del Rio T."/>
            <person name="Dalin E."/>
            <person name="Tice H."/>
            <person name="Pitluck S."/>
            <person name="Richardson P."/>
            <person name="Bruce D."/>
            <person name="Goodwin L."/>
            <person name="Han C."/>
            <person name="Detter J.C."/>
            <person name="Schmutz J."/>
            <person name="Brettin T."/>
            <person name="Land M."/>
            <person name="Hauser L."/>
            <person name="Kyrpides N.C."/>
            <person name="Ivanova N."/>
            <person name="Goeker M."/>
            <person name="Woyke T."/>
            <person name="Klenk H.P."/>
            <person name="Bryant D.A."/>
        </authorList>
    </citation>
    <scope>NUCLEOTIDE SEQUENCE [LARGE SCALE GENOMIC DNA]</scope>
    <source>
        <strain>ATCC 23779 / DSM 785 / 114-95</strain>
    </source>
</reference>
<keyword id="KW-0067">ATP-binding</keyword>
<keyword id="KW-0963">Cytoplasm</keyword>
<keyword id="KW-0227">DNA damage</keyword>
<keyword id="KW-0234">DNA repair</keyword>
<keyword id="KW-0235">DNA replication</keyword>
<keyword id="KW-0238">DNA-binding</keyword>
<keyword id="KW-0547">Nucleotide-binding</keyword>
<keyword id="KW-0742">SOS response</keyword>
<dbReference type="EMBL" id="CP000875">
    <property type="protein sequence ID" value="ABX06358.1"/>
    <property type="molecule type" value="Genomic_DNA"/>
</dbReference>
<dbReference type="SMR" id="A9B775"/>
<dbReference type="FunCoup" id="A9B775">
    <property type="interactions" value="221"/>
</dbReference>
<dbReference type="STRING" id="316274.Haur_3722"/>
<dbReference type="KEGG" id="hau:Haur_3722"/>
<dbReference type="eggNOG" id="COG1195">
    <property type="taxonomic scope" value="Bacteria"/>
</dbReference>
<dbReference type="HOGENOM" id="CLU_040267_1_1_0"/>
<dbReference type="InParanoid" id="A9B775"/>
<dbReference type="Proteomes" id="UP000000787">
    <property type="component" value="Chromosome"/>
</dbReference>
<dbReference type="GO" id="GO:0005737">
    <property type="term" value="C:cytoplasm"/>
    <property type="evidence" value="ECO:0007669"/>
    <property type="project" value="UniProtKB-SubCell"/>
</dbReference>
<dbReference type="GO" id="GO:0005524">
    <property type="term" value="F:ATP binding"/>
    <property type="evidence" value="ECO:0007669"/>
    <property type="project" value="UniProtKB-UniRule"/>
</dbReference>
<dbReference type="GO" id="GO:0016887">
    <property type="term" value="F:ATP hydrolysis activity"/>
    <property type="evidence" value="ECO:0007669"/>
    <property type="project" value="InterPro"/>
</dbReference>
<dbReference type="GO" id="GO:0003697">
    <property type="term" value="F:single-stranded DNA binding"/>
    <property type="evidence" value="ECO:0007669"/>
    <property type="project" value="UniProtKB-UniRule"/>
</dbReference>
<dbReference type="GO" id="GO:0006260">
    <property type="term" value="P:DNA replication"/>
    <property type="evidence" value="ECO:0007669"/>
    <property type="project" value="UniProtKB-UniRule"/>
</dbReference>
<dbReference type="GO" id="GO:0000731">
    <property type="term" value="P:DNA synthesis involved in DNA repair"/>
    <property type="evidence" value="ECO:0007669"/>
    <property type="project" value="TreeGrafter"/>
</dbReference>
<dbReference type="GO" id="GO:0006302">
    <property type="term" value="P:double-strand break repair"/>
    <property type="evidence" value="ECO:0007669"/>
    <property type="project" value="TreeGrafter"/>
</dbReference>
<dbReference type="GO" id="GO:0009432">
    <property type="term" value="P:SOS response"/>
    <property type="evidence" value="ECO:0007669"/>
    <property type="project" value="UniProtKB-UniRule"/>
</dbReference>
<dbReference type="Gene3D" id="3.40.50.300">
    <property type="entry name" value="P-loop containing nucleotide triphosphate hydrolases"/>
    <property type="match status" value="1"/>
</dbReference>
<dbReference type="Gene3D" id="1.20.1050.90">
    <property type="entry name" value="RecF/RecN/SMC, N-terminal domain"/>
    <property type="match status" value="1"/>
</dbReference>
<dbReference type="HAMAP" id="MF_00365">
    <property type="entry name" value="RecF"/>
    <property type="match status" value="1"/>
</dbReference>
<dbReference type="InterPro" id="IPR003593">
    <property type="entry name" value="AAA+_ATPase"/>
</dbReference>
<dbReference type="InterPro" id="IPR001238">
    <property type="entry name" value="DNA-binding_RecF"/>
</dbReference>
<dbReference type="InterPro" id="IPR018078">
    <property type="entry name" value="DNA-binding_RecF_CS"/>
</dbReference>
<dbReference type="InterPro" id="IPR027417">
    <property type="entry name" value="P-loop_NTPase"/>
</dbReference>
<dbReference type="InterPro" id="IPR003395">
    <property type="entry name" value="RecF/RecN/SMC_N"/>
</dbReference>
<dbReference type="InterPro" id="IPR042174">
    <property type="entry name" value="RecF_2"/>
</dbReference>
<dbReference type="NCBIfam" id="TIGR00611">
    <property type="entry name" value="recf"/>
    <property type="match status" value="1"/>
</dbReference>
<dbReference type="PANTHER" id="PTHR32182">
    <property type="entry name" value="DNA REPLICATION AND REPAIR PROTEIN RECF"/>
    <property type="match status" value="1"/>
</dbReference>
<dbReference type="PANTHER" id="PTHR32182:SF0">
    <property type="entry name" value="DNA REPLICATION AND REPAIR PROTEIN RECF"/>
    <property type="match status" value="1"/>
</dbReference>
<dbReference type="Pfam" id="PF02463">
    <property type="entry name" value="SMC_N"/>
    <property type="match status" value="1"/>
</dbReference>
<dbReference type="SMART" id="SM00382">
    <property type="entry name" value="AAA"/>
    <property type="match status" value="1"/>
</dbReference>
<dbReference type="SUPFAM" id="SSF52540">
    <property type="entry name" value="P-loop containing nucleoside triphosphate hydrolases"/>
    <property type="match status" value="1"/>
</dbReference>
<dbReference type="PROSITE" id="PS00617">
    <property type="entry name" value="RECF_1"/>
    <property type="match status" value="1"/>
</dbReference>
<dbReference type="PROSITE" id="PS00618">
    <property type="entry name" value="RECF_2"/>
    <property type="match status" value="1"/>
</dbReference>
<comment type="function">
    <text evidence="1">The RecF protein is involved in DNA metabolism; it is required for DNA replication and normal SOS inducibility. RecF binds preferentially to single-stranded, linear DNA. It also seems to bind ATP.</text>
</comment>
<comment type="subcellular location">
    <subcellularLocation>
        <location evidence="1">Cytoplasm</location>
    </subcellularLocation>
</comment>
<comment type="similarity">
    <text evidence="1">Belongs to the RecF family.</text>
</comment>
<evidence type="ECO:0000255" key="1">
    <source>
        <dbReference type="HAMAP-Rule" id="MF_00365"/>
    </source>
</evidence>
<gene>
    <name evidence="1" type="primary">recF</name>
    <name type="ordered locus">Haur_3722</name>
</gene>
<proteinExistence type="inferred from homology"/>
<name>RECF_HERA2</name>
<organism>
    <name type="scientific">Herpetosiphon aurantiacus (strain ATCC 23779 / DSM 785 / 114-95)</name>
    <dbReference type="NCBI Taxonomy" id="316274"/>
    <lineage>
        <taxon>Bacteria</taxon>
        <taxon>Bacillati</taxon>
        <taxon>Chloroflexota</taxon>
        <taxon>Chloroflexia</taxon>
        <taxon>Herpetosiphonales</taxon>
        <taxon>Herpetosiphonaceae</taxon>
        <taxon>Herpetosiphon</taxon>
    </lineage>
</organism>
<sequence>MYVSRLQLQDFRIYRSLNLALPPGVCLFYGANAAGKTTILEALYYLATTRSLRASVERELIALEAAGDLGLPPFARLAASLQPQPEAEMQTIEIVLQRKFGADGDLAPTTSKTIRINKIARRALDLIGQLRVVMFAPQDLELVTGAPAERRRYLDVTLSQIDGRYVRALSRYNQVLTQRNGLLRTSRERGRAASEQDLAFWDEELAKAGVYVLRERRRAVTTLDQLAQRLYAEISGSDLDLRLNYLDTTPAHDVPSFQAALKQLRREERERGVTLIGPHRDDLSIQLAEREVGSFGSRGQQRASTLALRLAEAELMHSRTGDRPVLLLDDLLSELDQKRREHLLTTIVRPQQQTLITATDLDDFSPNFLSQITRMHVDHGLIFPA</sequence>
<protein>
    <recommendedName>
        <fullName evidence="1">DNA replication and repair protein RecF</fullName>
    </recommendedName>
</protein>
<accession>A9B775</accession>
<feature type="chain" id="PRO_1000121124" description="DNA replication and repair protein RecF">
    <location>
        <begin position="1"/>
        <end position="385"/>
    </location>
</feature>
<feature type="binding site" evidence="1">
    <location>
        <begin position="30"/>
        <end position="37"/>
    </location>
    <ligand>
        <name>ATP</name>
        <dbReference type="ChEBI" id="CHEBI:30616"/>
    </ligand>
</feature>